<feature type="chain" id="PRO_0000408511" description="Rhomboid-related protein 2">
    <location>
        <begin position="1"/>
        <end position="302"/>
    </location>
</feature>
<feature type="chain" id="PRO_0000408512" description="Rhomboid-related protein 2, N-terminal fragment" evidence="1">
    <location>
        <begin position="1"/>
        <end status="unknown"/>
    </location>
</feature>
<feature type="chain" id="PRO_0000408513" description="Rhomboid-related protein 2, C-terminal fragment" evidence="1">
    <location>
        <begin status="unknown"/>
        <end position="302"/>
    </location>
</feature>
<feature type="transmembrane region" description="Helical" evidence="3">
    <location>
        <begin position="71"/>
        <end position="91"/>
    </location>
</feature>
<feature type="transmembrane region" description="Helical" evidence="3">
    <location>
        <begin position="127"/>
        <end position="147"/>
    </location>
</feature>
<feature type="transmembrane region" description="Helical" evidence="3">
    <location>
        <begin position="158"/>
        <end position="178"/>
    </location>
</feature>
<feature type="transmembrane region" description="Helical" evidence="3">
    <location>
        <begin position="182"/>
        <end position="202"/>
    </location>
</feature>
<feature type="transmembrane region" description="Helical" evidence="3">
    <location>
        <begin position="211"/>
        <end position="231"/>
    </location>
</feature>
<feature type="transmembrane region" description="Helical" evidence="3">
    <location>
        <begin position="244"/>
        <end position="264"/>
    </location>
</feature>
<feature type="transmembrane region" description="Helical" evidence="3">
    <location>
        <begin position="277"/>
        <end position="297"/>
    </location>
</feature>
<feature type="region of interest" description="Disordered" evidence="4">
    <location>
        <begin position="1"/>
        <end position="38"/>
    </location>
</feature>
<feature type="compositionally biased region" description="Basic and acidic residues" evidence="4">
    <location>
        <begin position="16"/>
        <end position="38"/>
    </location>
</feature>
<feature type="active site" description="Nucleophile">
    <location>
        <position position="186"/>
    </location>
</feature>
<feature type="active site" evidence="6">
    <location>
        <position position="249"/>
    </location>
</feature>
<feature type="mutagenesis site" description="Reduces protease activity." evidence="5">
    <original>A</original>
    <variation>P</variation>
    <location>
        <position position="185"/>
    </location>
</feature>
<feature type="mutagenesis site" description="Abolishes protease activity." evidence="5">
    <original>S</original>
    <variation>A</variation>
    <location>
        <position position="186"/>
    </location>
</feature>
<accession>A2AGA4</accession>
<sequence length="302" mass="33735">MAVAHEMEMESVNLNMEREGKEEPEEEKMKGNGEGKDFPRSRKVHRIVSKWMLPEPVRRTYLERANCLPPPLFIILISLAELAVFIYYAVWKPQKQWITLDTGILESPLTYCPEKREEAWRFISYMLVHAGVQHIVGNLLMQIVLGIPLEMVHKGLRVGLVYLAGVLAGSLASSIFDPLKSLVGASGGVYALMGGYFMNVIVNFREMIPAFGIVRLLVIILIVASDMGFALYRRFFVPANGSPVSFAAHIAGGFAGMSIGYTVFSCFDKTLLKDPRFWIAIAAYVACLLFAVFFNIFLSPAN</sequence>
<evidence type="ECO:0000250" key="1"/>
<evidence type="ECO:0000250" key="2">
    <source>
        <dbReference type="UniProtKB" id="Q9NX52"/>
    </source>
</evidence>
<evidence type="ECO:0000255" key="3"/>
<evidence type="ECO:0000256" key="4">
    <source>
        <dbReference type="SAM" id="MobiDB-lite"/>
    </source>
</evidence>
<evidence type="ECO:0000269" key="5">
    <source>
    </source>
</evidence>
<evidence type="ECO:0000305" key="6"/>
<name>RHBL2_MOUSE</name>
<organism>
    <name type="scientific">Mus musculus</name>
    <name type="common">Mouse</name>
    <dbReference type="NCBI Taxonomy" id="10090"/>
    <lineage>
        <taxon>Eukaryota</taxon>
        <taxon>Metazoa</taxon>
        <taxon>Chordata</taxon>
        <taxon>Craniata</taxon>
        <taxon>Vertebrata</taxon>
        <taxon>Euteleostomi</taxon>
        <taxon>Mammalia</taxon>
        <taxon>Eutheria</taxon>
        <taxon>Euarchontoglires</taxon>
        <taxon>Glires</taxon>
        <taxon>Rodentia</taxon>
        <taxon>Myomorpha</taxon>
        <taxon>Muroidea</taxon>
        <taxon>Muridae</taxon>
        <taxon>Murinae</taxon>
        <taxon>Mus</taxon>
        <taxon>Mus</taxon>
    </lineage>
</organism>
<gene>
    <name type="primary">Rhbdl2</name>
</gene>
<comment type="function">
    <text evidence="1">Involved in regulated intramembrane proteolysis and the subsequent release of functional polypeptides from their membrane anchors. Known substrate: EFNB3 (By similarity).</text>
</comment>
<comment type="catalytic activity">
    <reaction evidence="5">
        <text>Cleaves type-1 transmembrane domains using a catalytic dyad composed of serine and histidine that are contributed by different transmembrane domains.</text>
        <dbReference type="EC" id="3.4.21.105"/>
    </reaction>
</comment>
<comment type="subcellular location">
    <molecule>Rhomboid-related protein 2, C-terminal fragment</molecule>
    <subcellularLocation>
        <location evidence="2">Cell membrane</location>
        <topology evidence="3">Multi-pass membrane protein</topology>
    </subcellularLocation>
</comment>
<comment type="PTM">
    <text evidence="1">Proteolytic processing of the proenzyme produces an N- and a C-terminal fragment. The processing is required for activation of the protease (By similarity).</text>
</comment>
<comment type="similarity">
    <text evidence="6">Belongs to the peptidase S54 family.</text>
</comment>
<proteinExistence type="evidence at protein level"/>
<protein>
    <recommendedName>
        <fullName>Rhomboid-related protein 2</fullName>
        <shortName>RRP2</shortName>
        <ecNumber>3.4.21.105</ecNumber>
    </recommendedName>
    <component>
        <recommendedName>
            <fullName>Rhomboid-related protein 2, N-terminal fragment</fullName>
            <shortName>NTF</shortName>
        </recommendedName>
    </component>
    <component>
        <recommendedName>
            <fullName>Rhomboid-related protein 2, C-terminal fragment</fullName>
            <shortName>CTF</shortName>
        </recommendedName>
    </component>
</protein>
<keyword id="KW-1003">Cell membrane</keyword>
<keyword id="KW-0378">Hydrolase</keyword>
<keyword id="KW-0472">Membrane</keyword>
<keyword id="KW-0645">Protease</keyword>
<keyword id="KW-1185">Reference proteome</keyword>
<keyword id="KW-0720">Serine protease</keyword>
<keyword id="KW-0812">Transmembrane</keyword>
<keyword id="KW-1133">Transmembrane helix</keyword>
<reference key="1">
    <citation type="journal article" date="2009" name="PLoS Biol.">
        <title>Lineage-specific biology revealed by a finished genome assembly of the mouse.</title>
        <authorList>
            <person name="Church D.M."/>
            <person name="Goodstadt L."/>
            <person name="Hillier L.W."/>
            <person name="Zody M.C."/>
            <person name="Goldstein S."/>
            <person name="She X."/>
            <person name="Bult C.J."/>
            <person name="Agarwala R."/>
            <person name="Cherry J.L."/>
            <person name="DiCuccio M."/>
            <person name="Hlavina W."/>
            <person name="Kapustin Y."/>
            <person name="Meric P."/>
            <person name="Maglott D."/>
            <person name="Birtle Z."/>
            <person name="Marques A.C."/>
            <person name="Graves T."/>
            <person name="Zhou S."/>
            <person name="Teague B."/>
            <person name="Potamousis K."/>
            <person name="Churas C."/>
            <person name="Place M."/>
            <person name="Herschleb J."/>
            <person name="Runnheim R."/>
            <person name="Forrest D."/>
            <person name="Amos-Landgraf J."/>
            <person name="Schwartz D.C."/>
            <person name="Cheng Z."/>
            <person name="Lindblad-Toh K."/>
            <person name="Eichler E.E."/>
            <person name="Ponting C.P."/>
        </authorList>
    </citation>
    <scope>NUCLEOTIDE SEQUENCE [LARGE SCALE GENOMIC DNA]</scope>
    <source>
        <strain>C57BL/6J</strain>
    </source>
</reference>
<reference key="2">
    <citation type="journal article" date="2011" name="Cell">
        <title>Rhomboid family pseudoproteases use the ER quality control machinery to regulate intercellular signaling.</title>
        <authorList>
            <person name="Zettl M."/>
            <person name="Adrain C."/>
            <person name="Strisovsky K."/>
            <person name="Lastun V."/>
            <person name="Freeman M."/>
        </authorList>
    </citation>
    <scope>CATALYTIC ACTIVITY</scope>
    <scope>MUTAGENESIS OF ALA-185 AND SER-186</scope>
</reference>
<dbReference type="EC" id="3.4.21.105"/>
<dbReference type="EMBL" id="AL683811">
    <property type="status" value="NOT_ANNOTATED_CDS"/>
    <property type="molecule type" value="Genomic_DNA"/>
</dbReference>
<dbReference type="CCDS" id="CCDS38873.1"/>
<dbReference type="RefSeq" id="NP_898986.2">
    <property type="nucleotide sequence ID" value="NM_183163.3"/>
</dbReference>
<dbReference type="RefSeq" id="XP_006503088.1">
    <property type="nucleotide sequence ID" value="XM_006503025.5"/>
</dbReference>
<dbReference type="BioGRID" id="231007">
    <property type="interactions" value="1"/>
</dbReference>
<dbReference type="FunCoup" id="A2AGA4">
    <property type="interactions" value="71"/>
</dbReference>
<dbReference type="STRING" id="10090.ENSMUSP00000054546"/>
<dbReference type="MEROPS" id="S54.002"/>
<dbReference type="PhosphoSitePlus" id="A2AGA4"/>
<dbReference type="PaxDb" id="10090-ENSMUSP00000054546"/>
<dbReference type="ProteomicsDB" id="253268"/>
<dbReference type="Antibodypedia" id="31843">
    <property type="antibodies" value="93 antibodies from 23 providers"/>
</dbReference>
<dbReference type="DNASU" id="230726"/>
<dbReference type="Ensembl" id="ENSMUST00000053202.12">
    <property type="protein sequence ID" value="ENSMUSP00000054546.6"/>
    <property type="gene ID" value="ENSMUSG00000043333.13"/>
</dbReference>
<dbReference type="Ensembl" id="ENSMUST00000106204.2">
    <property type="protein sequence ID" value="ENSMUSP00000101810.2"/>
    <property type="gene ID" value="ENSMUSG00000043333.13"/>
</dbReference>
<dbReference type="GeneID" id="230726"/>
<dbReference type="KEGG" id="mmu:230726"/>
<dbReference type="UCSC" id="uc008upx.1">
    <property type="organism name" value="mouse"/>
</dbReference>
<dbReference type="AGR" id="MGI:3608413"/>
<dbReference type="CTD" id="54933"/>
<dbReference type="MGI" id="MGI:3608413">
    <property type="gene designation" value="Rhbdl2"/>
</dbReference>
<dbReference type="VEuPathDB" id="HostDB:ENSMUSG00000043333"/>
<dbReference type="eggNOG" id="KOG2289">
    <property type="taxonomic scope" value="Eukaryota"/>
</dbReference>
<dbReference type="GeneTree" id="ENSGT00940000159442"/>
<dbReference type="HOGENOM" id="CLU_048023_0_0_1"/>
<dbReference type="InParanoid" id="A2AGA4"/>
<dbReference type="OMA" id="VCCDQLM"/>
<dbReference type="OrthoDB" id="418595at2759"/>
<dbReference type="PhylomeDB" id="A2AGA4"/>
<dbReference type="TreeFam" id="TF313540"/>
<dbReference type="BioGRID-ORCS" id="230726">
    <property type="hits" value="1 hit in 79 CRISPR screens"/>
</dbReference>
<dbReference type="PRO" id="PR:A2AGA4"/>
<dbReference type="Proteomes" id="UP000000589">
    <property type="component" value="Chromosome 4"/>
</dbReference>
<dbReference type="RNAct" id="A2AGA4">
    <property type="molecule type" value="protein"/>
</dbReference>
<dbReference type="Bgee" id="ENSMUSG00000043333">
    <property type="expression patterns" value="Expressed in lobe of prostate and 107 other cell types or tissues"/>
</dbReference>
<dbReference type="GO" id="GO:0005886">
    <property type="term" value="C:plasma membrane"/>
    <property type="evidence" value="ECO:0000250"/>
    <property type="project" value="UniProtKB"/>
</dbReference>
<dbReference type="GO" id="GO:0004252">
    <property type="term" value="F:serine-type endopeptidase activity"/>
    <property type="evidence" value="ECO:0000315"/>
    <property type="project" value="UniProtKB"/>
</dbReference>
<dbReference type="GO" id="GO:0006508">
    <property type="term" value="P:proteolysis"/>
    <property type="evidence" value="ECO:0007669"/>
    <property type="project" value="UniProtKB-KW"/>
</dbReference>
<dbReference type="FunFam" id="1.20.1540.10:FF:000007">
    <property type="entry name" value="Rhomboid like 2"/>
    <property type="match status" value="1"/>
</dbReference>
<dbReference type="Gene3D" id="1.20.1540.10">
    <property type="entry name" value="Rhomboid-like"/>
    <property type="match status" value="1"/>
</dbReference>
<dbReference type="InterPro" id="IPR022764">
    <property type="entry name" value="Peptidase_S54_rhomboid_dom"/>
</dbReference>
<dbReference type="InterPro" id="IPR017213">
    <property type="entry name" value="Peptidase_S54_rhomboid_met"/>
</dbReference>
<dbReference type="InterPro" id="IPR035952">
    <property type="entry name" value="Rhomboid-like_sf"/>
</dbReference>
<dbReference type="InterPro" id="IPR051739">
    <property type="entry name" value="Rhomboid_IM_Serine_Proteases"/>
</dbReference>
<dbReference type="PANTHER" id="PTHR45840">
    <property type="entry name" value="RHOMBOID-RELATED PROTEIN"/>
    <property type="match status" value="1"/>
</dbReference>
<dbReference type="PANTHER" id="PTHR45840:SF6">
    <property type="entry name" value="RHOMBOID-RELATED PROTEIN 2"/>
    <property type="match status" value="1"/>
</dbReference>
<dbReference type="Pfam" id="PF01694">
    <property type="entry name" value="Rhomboid"/>
    <property type="match status" value="1"/>
</dbReference>
<dbReference type="PIRSF" id="PIRSF037470">
    <property type="entry name" value="Rhomboid"/>
    <property type="match status" value="1"/>
</dbReference>
<dbReference type="SUPFAM" id="SSF144091">
    <property type="entry name" value="Rhomboid-like"/>
    <property type="match status" value="1"/>
</dbReference>